<comment type="function">
    <text evidence="1">Forms part of the ribosomal stalk, playing a central role in the interaction of the ribosome with GTP-bound translation factors.</text>
</comment>
<comment type="subunit">
    <text evidence="1">Part of the ribosomal stalk of the 50S ribosomal subunit. The N-terminus interacts with L11 and the large rRNA to form the base of the stalk. The C-terminus forms an elongated spine to which L12 dimers bind in a sequential fashion forming a multimeric L10(L12)X complex.</text>
</comment>
<comment type="mass spectrometry" mass="19067.6" method="Electrospray" evidence="2"/>
<comment type="similarity">
    <text evidence="1">Belongs to the universal ribosomal protein uL10 family.</text>
</comment>
<feature type="initiator methionine" description="Removed">
    <location>
        <position position="1"/>
    </location>
</feature>
<feature type="chain" id="PRO_0000154696" description="Large ribosomal subunit protein uL10">
    <location>
        <begin position="2"/>
        <end position="186"/>
    </location>
</feature>
<gene>
    <name evidence="1" type="primary">rplJ</name>
    <name type="ordered locus">RPA3270</name>
</gene>
<protein>
    <recommendedName>
        <fullName evidence="1">Large ribosomal subunit protein uL10</fullName>
    </recommendedName>
    <alternativeName>
        <fullName evidence="3">50S ribosomal protein L10</fullName>
    </alternativeName>
    <alternativeName>
        <fullName>RRP-L10</fullName>
    </alternativeName>
</protein>
<organism>
    <name type="scientific">Rhodopseudomonas palustris (strain ATCC BAA-98 / CGA009)</name>
    <dbReference type="NCBI Taxonomy" id="258594"/>
    <lineage>
        <taxon>Bacteria</taxon>
        <taxon>Pseudomonadati</taxon>
        <taxon>Pseudomonadota</taxon>
        <taxon>Alphaproteobacteria</taxon>
        <taxon>Hyphomicrobiales</taxon>
        <taxon>Nitrobacteraceae</taxon>
        <taxon>Rhodopseudomonas</taxon>
    </lineage>
</organism>
<name>RL10_RHOPA</name>
<evidence type="ECO:0000255" key="1">
    <source>
        <dbReference type="HAMAP-Rule" id="MF_00362"/>
    </source>
</evidence>
<evidence type="ECO:0000269" key="2">
    <source>
    </source>
</evidence>
<evidence type="ECO:0000305" key="3"/>
<dbReference type="EMBL" id="BX572603">
    <property type="protein sequence ID" value="CAE28711.1"/>
    <property type="molecule type" value="Genomic_DNA"/>
</dbReference>
<dbReference type="SMR" id="Q6N4R7"/>
<dbReference type="IntAct" id="Q6N4R7">
    <property type="interactions" value="52"/>
</dbReference>
<dbReference type="STRING" id="258594.RPA3270"/>
<dbReference type="eggNOG" id="COG0244">
    <property type="taxonomic scope" value="Bacteria"/>
</dbReference>
<dbReference type="HOGENOM" id="CLU_092227_0_0_5"/>
<dbReference type="PhylomeDB" id="Q6N4R7"/>
<dbReference type="GO" id="GO:0015934">
    <property type="term" value="C:large ribosomal subunit"/>
    <property type="evidence" value="ECO:0007669"/>
    <property type="project" value="InterPro"/>
</dbReference>
<dbReference type="GO" id="GO:0070180">
    <property type="term" value="F:large ribosomal subunit rRNA binding"/>
    <property type="evidence" value="ECO:0007669"/>
    <property type="project" value="UniProtKB-UniRule"/>
</dbReference>
<dbReference type="GO" id="GO:0003735">
    <property type="term" value="F:structural constituent of ribosome"/>
    <property type="evidence" value="ECO:0007669"/>
    <property type="project" value="InterPro"/>
</dbReference>
<dbReference type="GO" id="GO:0006412">
    <property type="term" value="P:translation"/>
    <property type="evidence" value="ECO:0007669"/>
    <property type="project" value="UniProtKB-UniRule"/>
</dbReference>
<dbReference type="CDD" id="cd05797">
    <property type="entry name" value="Ribosomal_L10"/>
    <property type="match status" value="1"/>
</dbReference>
<dbReference type="Gene3D" id="3.30.70.1730">
    <property type="match status" value="1"/>
</dbReference>
<dbReference type="Gene3D" id="6.10.250.290">
    <property type="match status" value="1"/>
</dbReference>
<dbReference type="HAMAP" id="MF_00362">
    <property type="entry name" value="Ribosomal_uL10"/>
    <property type="match status" value="1"/>
</dbReference>
<dbReference type="InterPro" id="IPR001790">
    <property type="entry name" value="Ribosomal_uL10"/>
</dbReference>
<dbReference type="InterPro" id="IPR043141">
    <property type="entry name" value="Ribosomal_uL10-like_sf"/>
</dbReference>
<dbReference type="InterPro" id="IPR022973">
    <property type="entry name" value="Ribosomal_uL10_bac"/>
</dbReference>
<dbReference type="InterPro" id="IPR047865">
    <property type="entry name" value="Ribosomal_uL10_bac_type"/>
</dbReference>
<dbReference type="InterPro" id="IPR002363">
    <property type="entry name" value="Ribosomal_uL10_CS_bac"/>
</dbReference>
<dbReference type="NCBIfam" id="NF000955">
    <property type="entry name" value="PRK00099.1-1"/>
    <property type="match status" value="1"/>
</dbReference>
<dbReference type="PANTHER" id="PTHR11560">
    <property type="entry name" value="39S RIBOSOMAL PROTEIN L10, MITOCHONDRIAL"/>
    <property type="match status" value="1"/>
</dbReference>
<dbReference type="Pfam" id="PF00466">
    <property type="entry name" value="Ribosomal_L10"/>
    <property type="match status" value="1"/>
</dbReference>
<dbReference type="SUPFAM" id="SSF160369">
    <property type="entry name" value="Ribosomal protein L10-like"/>
    <property type="match status" value="1"/>
</dbReference>
<dbReference type="PROSITE" id="PS01109">
    <property type="entry name" value="RIBOSOMAL_L10"/>
    <property type="match status" value="1"/>
</dbReference>
<sequence length="186" mass="19171">MVLLAGTANRRELAVERAAKKEAVESLNGLFQTTSVAIVAHYSGLTVAQMQKLRQQMKQAGASVKVSKNRLAKIALEGTDVAAIGPLLKGPTVIATSSDPVAAPKVAVEFAKANEKFVILGGSMGTTVLNVDGVKALASLPSLDELRAKLVGLVQAPATKIAQVTTAPAAKLARVVQAYASKSEAA</sequence>
<proteinExistence type="evidence at protein level"/>
<accession>Q6N4R7</accession>
<keyword id="KW-0687">Ribonucleoprotein</keyword>
<keyword id="KW-0689">Ribosomal protein</keyword>
<keyword id="KW-0694">RNA-binding</keyword>
<keyword id="KW-0699">rRNA-binding</keyword>
<reference key="1">
    <citation type="journal article" date="2004" name="Nat. Biotechnol.">
        <title>Complete genome sequence of the metabolically versatile photosynthetic bacterium Rhodopseudomonas palustris.</title>
        <authorList>
            <person name="Larimer F.W."/>
            <person name="Chain P."/>
            <person name="Hauser L."/>
            <person name="Lamerdin J.E."/>
            <person name="Malfatti S."/>
            <person name="Do L."/>
            <person name="Land M.L."/>
            <person name="Pelletier D.A."/>
            <person name="Beatty J.T."/>
            <person name="Lang A.S."/>
            <person name="Tabita F.R."/>
            <person name="Gibson J.L."/>
            <person name="Hanson T.E."/>
            <person name="Bobst C."/>
            <person name="Torres y Torres J.L."/>
            <person name="Peres C."/>
            <person name="Harrison F.H."/>
            <person name="Gibson J."/>
            <person name="Harwood C.S."/>
        </authorList>
    </citation>
    <scope>NUCLEOTIDE SEQUENCE [LARGE SCALE GENOMIC DNA]</scope>
    <source>
        <strain>ATCC BAA-98 / CGA009</strain>
    </source>
</reference>
<reference key="2">
    <citation type="journal article" date="2004" name="J. Proteome Res.">
        <title>Characterization of the 70S ribosome from Rhodopseudomonas palustris using an integrated 'top-down' and 'bottom-up' mass spectrometric approach.</title>
        <authorList>
            <person name="Strader M.B."/>
            <person name="VerBerkmoes N.C."/>
            <person name="Tabb D.L."/>
            <person name="Connelly H.M."/>
            <person name="Barton J.W."/>
            <person name="Bruce B.D."/>
            <person name="Pelletier D.A."/>
            <person name="Davison B.H."/>
            <person name="Hettich R.L."/>
            <person name="Larimer F.W."/>
            <person name="Hurst G.B."/>
        </authorList>
    </citation>
    <scope>MASS SPECTROMETRY</scope>
    <source>
        <strain>ATCC BAA-98 / CGA009</strain>
    </source>
</reference>